<reference key="1">
    <citation type="submission" date="2007-03" db="EMBL/GenBank/DDBJ databases">
        <title>Complete sequence of Shewanella loihica PV-4.</title>
        <authorList>
            <consortium name="US DOE Joint Genome Institute"/>
            <person name="Copeland A."/>
            <person name="Lucas S."/>
            <person name="Lapidus A."/>
            <person name="Barry K."/>
            <person name="Detter J.C."/>
            <person name="Glavina del Rio T."/>
            <person name="Hammon N."/>
            <person name="Israni S."/>
            <person name="Dalin E."/>
            <person name="Tice H."/>
            <person name="Pitluck S."/>
            <person name="Chain P."/>
            <person name="Malfatti S."/>
            <person name="Shin M."/>
            <person name="Vergez L."/>
            <person name="Schmutz J."/>
            <person name="Larimer F."/>
            <person name="Land M."/>
            <person name="Hauser L."/>
            <person name="Kyrpides N."/>
            <person name="Mikhailova N."/>
            <person name="Romine M.F."/>
            <person name="Serres G."/>
            <person name="Fredrickson J."/>
            <person name="Tiedje J."/>
            <person name="Richardson P."/>
        </authorList>
    </citation>
    <scope>NUCLEOTIDE SEQUENCE [LARGE SCALE GENOMIC DNA]</scope>
    <source>
        <strain>ATCC BAA-1088 / PV-4</strain>
    </source>
</reference>
<dbReference type="EC" id="3.1.1.96" evidence="1"/>
<dbReference type="EMBL" id="CP000606">
    <property type="protein sequence ID" value="ABO25408.1"/>
    <property type="molecule type" value="Genomic_DNA"/>
</dbReference>
<dbReference type="RefSeq" id="WP_011867337.1">
    <property type="nucleotide sequence ID" value="NC_009092.1"/>
</dbReference>
<dbReference type="SMR" id="A3QIW0"/>
<dbReference type="STRING" id="323850.Shew_3542"/>
<dbReference type="KEGG" id="slo:Shew_3542"/>
<dbReference type="eggNOG" id="COG1490">
    <property type="taxonomic scope" value="Bacteria"/>
</dbReference>
<dbReference type="HOGENOM" id="CLU_076901_1_1_6"/>
<dbReference type="OrthoDB" id="9801395at2"/>
<dbReference type="Proteomes" id="UP000001558">
    <property type="component" value="Chromosome"/>
</dbReference>
<dbReference type="GO" id="GO:0005737">
    <property type="term" value="C:cytoplasm"/>
    <property type="evidence" value="ECO:0007669"/>
    <property type="project" value="UniProtKB-SubCell"/>
</dbReference>
<dbReference type="GO" id="GO:0051500">
    <property type="term" value="F:D-tyrosyl-tRNA(Tyr) deacylase activity"/>
    <property type="evidence" value="ECO:0007669"/>
    <property type="project" value="TreeGrafter"/>
</dbReference>
<dbReference type="GO" id="GO:0106026">
    <property type="term" value="F:Gly-tRNA(Ala) deacylase activity"/>
    <property type="evidence" value="ECO:0007669"/>
    <property type="project" value="UniProtKB-UniRule"/>
</dbReference>
<dbReference type="GO" id="GO:0043908">
    <property type="term" value="F:Ser(Gly)-tRNA(Ala) hydrolase activity"/>
    <property type="evidence" value="ECO:0007669"/>
    <property type="project" value="UniProtKB-UniRule"/>
</dbReference>
<dbReference type="GO" id="GO:0000049">
    <property type="term" value="F:tRNA binding"/>
    <property type="evidence" value="ECO:0007669"/>
    <property type="project" value="UniProtKB-UniRule"/>
</dbReference>
<dbReference type="GO" id="GO:0019478">
    <property type="term" value="P:D-amino acid catabolic process"/>
    <property type="evidence" value="ECO:0007669"/>
    <property type="project" value="UniProtKB-UniRule"/>
</dbReference>
<dbReference type="CDD" id="cd00563">
    <property type="entry name" value="Dtyr_deacylase"/>
    <property type="match status" value="1"/>
</dbReference>
<dbReference type="FunFam" id="3.50.80.10:FF:000001">
    <property type="entry name" value="D-aminoacyl-tRNA deacylase"/>
    <property type="match status" value="1"/>
</dbReference>
<dbReference type="Gene3D" id="3.50.80.10">
    <property type="entry name" value="D-tyrosyl-tRNA(Tyr) deacylase"/>
    <property type="match status" value="1"/>
</dbReference>
<dbReference type="HAMAP" id="MF_00518">
    <property type="entry name" value="Deacylase_Dtd"/>
    <property type="match status" value="1"/>
</dbReference>
<dbReference type="InterPro" id="IPR003732">
    <property type="entry name" value="Daa-tRNA_deacyls_DTD"/>
</dbReference>
<dbReference type="InterPro" id="IPR023509">
    <property type="entry name" value="DTD-like_sf"/>
</dbReference>
<dbReference type="NCBIfam" id="TIGR00256">
    <property type="entry name" value="D-aminoacyl-tRNA deacylase"/>
    <property type="match status" value="1"/>
</dbReference>
<dbReference type="PANTHER" id="PTHR10472:SF5">
    <property type="entry name" value="D-AMINOACYL-TRNA DEACYLASE 1"/>
    <property type="match status" value="1"/>
</dbReference>
<dbReference type="PANTHER" id="PTHR10472">
    <property type="entry name" value="D-TYROSYL-TRNA TYR DEACYLASE"/>
    <property type="match status" value="1"/>
</dbReference>
<dbReference type="Pfam" id="PF02580">
    <property type="entry name" value="Tyr_Deacylase"/>
    <property type="match status" value="1"/>
</dbReference>
<dbReference type="SUPFAM" id="SSF69500">
    <property type="entry name" value="DTD-like"/>
    <property type="match status" value="1"/>
</dbReference>
<sequence length="145" mass="15596">MIALIQRVKQAKVDVDGQTIGAIDKGLLVLLGVEREDDQAKMEKLATKVMSYRIFSDEDGKMNLNLKQVGGSLLVVSQFTLAADTGRGLRPSFSGAGTPEQAKQLYQAFVDYCAAQGVPVQTGEFAADMQVSLVNDGPVTFNLQV</sequence>
<evidence type="ECO:0000255" key="1">
    <source>
        <dbReference type="HAMAP-Rule" id="MF_00518"/>
    </source>
</evidence>
<organism>
    <name type="scientific">Shewanella loihica (strain ATCC BAA-1088 / PV-4)</name>
    <dbReference type="NCBI Taxonomy" id="323850"/>
    <lineage>
        <taxon>Bacteria</taxon>
        <taxon>Pseudomonadati</taxon>
        <taxon>Pseudomonadota</taxon>
        <taxon>Gammaproteobacteria</taxon>
        <taxon>Alteromonadales</taxon>
        <taxon>Shewanellaceae</taxon>
        <taxon>Shewanella</taxon>
    </lineage>
</organism>
<accession>A3QIW0</accession>
<name>DTD_SHELP</name>
<gene>
    <name evidence="1" type="primary">dtd</name>
    <name type="ordered locus">Shew_3542</name>
</gene>
<proteinExistence type="inferred from homology"/>
<keyword id="KW-0963">Cytoplasm</keyword>
<keyword id="KW-0378">Hydrolase</keyword>
<keyword id="KW-1185">Reference proteome</keyword>
<keyword id="KW-0694">RNA-binding</keyword>
<keyword id="KW-0820">tRNA-binding</keyword>
<protein>
    <recommendedName>
        <fullName evidence="1">D-aminoacyl-tRNA deacylase</fullName>
        <shortName evidence="1">DTD</shortName>
        <ecNumber evidence="1">3.1.1.96</ecNumber>
    </recommendedName>
    <alternativeName>
        <fullName evidence="1">Gly-tRNA(Ala) deacylase</fullName>
    </alternativeName>
</protein>
<feature type="chain" id="PRO_1000050884" description="D-aminoacyl-tRNA deacylase">
    <location>
        <begin position="1"/>
        <end position="145"/>
    </location>
</feature>
<feature type="short sequence motif" description="Gly-cisPro motif, important for rejection of L-amino acids" evidence="1">
    <location>
        <begin position="137"/>
        <end position="138"/>
    </location>
</feature>
<comment type="function">
    <text evidence="1">An aminoacyl-tRNA editing enzyme that deacylates mischarged D-aminoacyl-tRNAs. Also deacylates mischarged glycyl-tRNA(Ala), protecting cells against glycine mischarging by AlaRS. Acts via tRNA-based rather than protein-based catalysis; rejects L-amino acids rather than detecting D-amino acids in the active site. By recycling D-aminoacyl-tRNA to D-amino acids and free tRNA molecules, this enzyme counteracts the toxicity associated with the formation of D-aminoacyl-tRNA entities in vivo and helps enforce protein L-homochirality.</text>
</comment>
<comment type="catalytic activity">
    <reaction evidence="1">
        <text>glycyl-tRNA(Ala) + H2O = tRNA(Ala) + glycine + H(+)</text>
        <dbReference type="Rhea" id="RHEA:53744"/>
        <dbReference type="Rhea" id="RHEA-COMP:9657"/>
        <dbReference type="Rhea" id="RHEA-COMP:13640"/>
        <dbReference type="ChEBI" id="CHEBI:15377"/>
        <dbReference type="ChEBI" id="CHEBI:15378"/>
        <dbReference type="ChEBI" id="CHEBI:57305"/>
        <dbReference type="ChEBI" id="CHEBI:78442"/>
        <dbReference type="ChEBI" id="CHEBI:78522"/>
        <dbReference type="EC" id="3.1.1.96"/>
    </reaction>
</comment>
<comment type="catalytic activity">
    <reaction evidence="1">
        <text>a D-aminoacyl-tRNA + H2O = a tRNA + a D-alpha-amino acid + H(+)</text>
        <dbReference type="Rhea" id="RHEA:13953"/>
        <dbReference type="Rhea" id="RHEA-COMP:10123"/>
        <dbReference type="Rhea" id="RHEA-COMP:10124"/>
        <dbReference type="ChEBI" id="CHEBI:15377"/>
        <dbReference type="ChEBI" id="CHEBI:15378"/>
        <dbReference type="ChEBI" id="CHEBI:59871"/>
        <dbReference type="ChEBI" id="CHEBI:78442"/>
        <dbReference type="ChEBI" id="CHEBI:79333"/>
        <dbReference type="EC" id="3.1.1.96"/>
    </reaction>
</comment>
<comment type="subunit">
    <text evidence="1">Homodimer.</text>
</comment>
<comment type="subcellular location">
    <subcellularLocation>
        <location evidence="1">Cytoplasm</location>
    </subcellularLocation>
</comment>
<comment type="domain">
    <text evidence="1">A Gly-cisPro motif from one monomer fits into the active site of the other monomer to allow specific chiral rejection of L-amino acids.</text>
</comment>
<comment type="similarity">
    <text evidence="1">Belongs to the DTD family.</text>
</comment>